<sequence length="37" mass="4063">SSTCIRTDQPCPYNESCCSGSCTYKANENGNQVKRCD</sequence>
<dbReference type="SMR" id="P0C2L7"/>
<dbReference type="ArachnoServer" id="AS000197">
    <property type="toxin name" value="omega-hexatoxin-Hi1c"/>
</dbReference>
<dbReference type="GO" id="GO:0005576">
    <property type="term" value="C:extracellular region"/>
    <property type="evidence" value="ECO:0007669"/>
    <property type="project" value="UniProtKB-SubCell"/>
</dbReference>
<dbReference type="GO" id="GO:0019855">
    <property type="term" value="F:calcium channel inhibitor activity"/>
    <property type="evidence" value="ECO:0007669"/>
    <property type="project" value="InterPro"/>
</dbReference>
<dbReference type="GO" id="GO:0090729">
    <property type="term" value="F:toxin activity"/>
    <property type="evidence" value="ECO:0007669"/>
    <property type="project" value="UniProtKB-KW"/>
</dbReference>
<dbReference type="GO" id="GO:0006952">
    <property type="term" value="P:defense response"/>
    <property type="evidence" value="ECO:0007669"/>
    <property type="project" value="InterPro"/>
</dbReference>
<dbReference type="InterPro" id="IPR009415">
    <property type="entry name" value="Omega-atracotox"/>
</dbReference>
<dbReference type="Pfam" id="PF06357">
    <property type="entry name" value="Omega-toxin"/>
    <property type="match status" value="1"/>
</dbReference>
<dbReference type="SUPFAM" id="SSF57059">
    <property type="entry name" value="omega toxin-like"/>
    <property type="match status" value="1"/>
</dbReference>
<organism>
    <name type="scientific">Hadronyche infensa</name>
    <name type="common">Fraser island funnel-web spider</name>
    <name type="synonym">Atrax infensus</name>
    <dbReference type="NCBI Taxonomy" id="153481"/>
    <lineage>
        <taxon>Eukaryota</taxon>
        <taxon>Metazoa</taxon>
        <taxon>Ecdysozoa</taxon>
        <taxon>Arthropoda</taxon>
        <taxon>Chelicerata</taxon>
        <taxon>Arachnida</taxon>
        <taxon>Araneae</taxon>
        <taxon>Mygalomorphae</taxon>
        <taxon>Hexathelidae</taxon>
        <taxon>Hadronyche</taxon>
    </lineage>
</organism>
<feature type="peptide" id="PRO_0000280460" description="Omega-hexatoxin-Hi1c" evidence="2">
    <location>
        <begin position="1"/>
        <end position="37"/>
    </location>
</feature>
<feature type="site" description="Critical for insecticidal activity" evidence="1">
    <location>
        <position position="10"/>
    </location>
</feature>
<feature type="site" description="Critical for insecticidal activity" evidence="1">
    <location>
        <position position="27"/>
    </location>
</feature>
<feature type="site" description="Critical for insecticidal activity" evidence="1">
    <location>
        <position position="35"/>
    </location>
</feature>
<feature type="disulfide bond" evidence="1">
    <location>
        <begin position="4"/>
        <end position="18"/>
    </location>
</feature>
<feature type="disulfide bond" evidence="1">
    <location>
        <begin position="11"/>
        <end position="22"/>
    </location>
</feature>
<feature type="disulfide bond" evidence="1">
    <location>
        <begin position="17"/>
        <end position="36"/>
    </location>
</feature>
<keyword id="KW-0108">Calcium channel impairing toxin</keyword>
<keyword id="KW-0903">Direct protein sequencing</keyword>
<keyword id="KW-1015">Disulfide bond</keyword>
<keyword id="KW-0872">Ion channel impairing toxin</keyword>
<keyword id="KW-0960">Knottin</keyword>
<keyword id="KW-0528">Neurotoxin</keyword>
<keyword id="KW-0964">Secreted</keyword>
<keyword id="KW-0800">Toxin</keyword>
<keyword id="KW-1218">Voltage-gated calcium channel impairing toxin</keyword>
<name>TO1C_HADIN</name>
<reference key="1">
    <citation type="patent" date="1998-06-09" number="US5763568">
        <title>Insecticidal toxins derived from funnel web (Atrax or Hadronyche) spiders.</title>
        <authorList>
            <person name="Atkinson R.K."/>
            <person name="Howden M.E.H."/>
            <person name="Tyler M.I."/>
            <person name="Vonarx E.J."/>
        </authorList>
    </citation>
    <scope>PROTEIN SEQUENCE</scope>
    <scope>MASS SPECTROMETRY</scope>
    <scope>SUBCELLULAR LOCATION</scope>
</reference>
<accession>P0C2L7</accession>
<evidence type="ECO:0000250" key="1">
    <source>
        <dbReference type="UniProtKB" id="P56207"/>
    </source>
</evidence>
<evidence type="ECO:0000269" key="2">
    <source ref="1"/>
</evidence>
<evidence type="ECO:0000305" key="3"/>
<evidence type="ECO:0000305" key="4">
    <source ref="1"/>
</evidence>
<comment type="function">
    <text evidence="1">Inhibits insect, but not mammalian, voltage-gated calcium channels (Cav).</text>
</comment>
<comment type="subcellular location">
    <subcellularLocation>
        <location evidence="2">Secreted</location>
    </subcellularLocation>
</comment>
<comment type="tissue specificity">
    <text evidence="4">Expressed by the venom gland.</text>
</comment>
<comment type="domain">
    <text evidence="3">The presence of a 'disulfide through disulfide knot' structurally defines this protein as a knottin.</text>
</comment>
<comment type="mass spectrometry" mass="4049.0" method="Plasma desorption" evidence="2"/>
<comment type="similarity">
    <text evidence="3">Belongs to the neurotoxin 08 (Shiva) family. 01 (omega toxin) subfamily.</text>
</comment>
<protein>
    <recommendedName>
        <fullName>Omega-hexatoxin-Hi1c</fullName>
        <shortName>Omega-HXTX-Hi1c</shortName>
    </recommendedName>
    <alternativeName>
        <fullName>Omega-atracotoxin-Hi1c</fullName>
        <shortName>AcTx-Hi1</shortName>
        <shortName>Omega-AcTx-Hi1c</shortName>
    </alternativeName>
</protein>
<proteinExistence type="evidence at protein level"/>